<evidence type="ECO:0000255" key="1">
    <source>
        <dbReference type="HAMAP-Rule" id="MF_00122"/>
    </source>
</evidence>
<organism>
    <name type="scientific">Hyphomonas neptunium (strain ATCC 15444)</name>
    <dbReference type="NCBI Taxonomy" id="228405"/>
    <lineage>
        <taxon>Bacteria</taxon>
        <taxon>Pseudomonadati</taxon>
        <taxon>Pseudomonadota</taxon>
        <taxon>Alphaproteobacteria</taxon>
        <taxon>Hyphomonadales</taxon>
        <taxon>Hyphomonadaceae</taxon>
        <taxon>Hyphomonas</taxon>
    </lineage>
</organism>
<proteinExistence type="inferred from homology"/>
<protein>
    <recommendedName>
        <fullName evidence="1">Aspartyl/glutamyl-tRNA(Asn/Gln) amidotransferase subunit C</fullName>
        <shortName evidence="1">Asp/Glu-ADT subunit C</shortName>
        <ecNumber evidence="1">6.3.5.-</ecNumber>
    </recommendedName>
</protein>
<accession>Q0BZU9</accession>
<comment type="function">
    <text evidence="1">Allows the formation of correctly charged Asn-tRNA(Asn) or Gln-tRNA(Gln) through the transamidation of misacylated Asp-tRNA(Asn) or Glu-tRNA(Gln) in organisms which lack either or both of asparaginyl-tRNA or glutaminyl-tRNA synthetases. The reaction takes place in the presence of glutamine and ATP through an activated phospho-Asp-tRNA(Asn) or phospho-Glu-tRNA(Gln).</text>
</comment>
<comment type="catalytic activity">
    <reaction evidence="1">
        <text>L-glutamyl-tRNA(Gln) + L-glutamine + ATP + H2O = L-glutaminyl-tRNA(Gln) + L-glutamate + ADP + phosphate + H(+)</text>
        <dbReference type="Rhea" id="RHEA:17521"/>
        <dbReference type="Rhea" id="RHEA-COMP:9681"/>
        <dbReference type="Rhea" id="RHEA-COMP:9684"/>
        <dbReference type="ChEBI" id="CHEBI:15377"/>
        <dbReference type="ChEBI" id="CHEBI:15378"/>
        <dbReference type="ChEBI" id="CHEBI:29985"/>
        <dbReference type="ChEBI" id="CHEBI:30616"/>
        <dbReference type="ChEBI" id="CHEBI:43474"/>
        <dbReference type="ChEBI" id="CHEBI:58359"/>
        <dbReference type="ChEBI" id="CHEBI:78520"/>
        <dbReference type="ChEBI" id="CHEBI:78521"/>
        <dbReference type="ChEBI" id="CHEBI:456216"/>
    </reaction>
</comment>
<comment type="catalytic activity">
    <reaction evidence="1">
        <text>L-aspartyl-tRNA(Asn) + L-glutamine + ATP + H2O = L-asparaginyl-tRNA(Asn) + L-glutamate + ADP + phosphate + 2 H(+)</text>
        <dbReference type="Rhea" id="RHEA:14513"/>
        <dbReference type="Rhea" id="RHEA-COMP:9674"/>
        <dbReference type="Rhea" id="RHEA-COMP:9677"/>
        <dbReference type="ChEBI" id="CHEBI:15377"/>
        <dbReference type="ChEBI" id="CHEBI:15378"/>
        <dbReference type="ChEBI" id="CHEBI:29985"/>
        <dbReference type="ChEBI" id="CHEBI:30616"/>
        <dbReference type="ChEBI" id="CHEBI:43474"/>
        <dbReference type="ChEBI" id="CHEBI:58359"/>
        <dbReference type="ChEBI" id="CHEBI:78515"/>
        <dbReference type="ChEBI" id="CHEBI:78516"/>
        <dbReference type="ChEBI" id="CHEBI:456216"/>
    </reaction>
</comment>
<comment type="subunit">
    <text evidence="1">Heterotrimer of A, B and C subunits.</text>
</comment>
<comment type="similarity">
    <text evidence="1">Belongs to the GatC family.</text>
</comment>
<feature type="chain" id="PRO_1000016130" description="Aspartyl/glutamyl-tRNA(Asn/Gln) amidotransferase subunit C">
    <location>
        <begin position="1"/>
        <end position="95"/>
    </location>
</feature>
<sequence>MSVTRDDVRKVARLSRIAVPEERLDELAGELNGILGWIDQLNEVDVEGVEPMTSVVETKLPMRDDVVTDGNIQDQVLANAPRSEHGFFVVPKAVE</sequence>
<keyword id="KW-0067">ATP-binding</keyword>
<keyword id="KW-0436">Ligase</keyword>
<keyword id="KW-0547">Nucleotide-binding</keyword>
<keyword id="KW-0648">Protein biosynthesis</keyword>
<keyword id="KW-1185">Reference proteome</keyword>
<gene>
    <name evidence="1" type="primary">gatC</name>
    <name type="ordered locus">HNE_2299</name>
</gene>
<name>GATC_HYPNA</name>
<reference key="1">
    <citation type="journal article" date="2006" name="J. Bacteriol.">
        <title>Comparative genomic evidence for a close relationship between the dimorphic prosthecate bacteria Hyphomonas neptunium and Caulobacter crescentus.</title>
        <authorList>
            <person name="Badger J.H."/>
            <person name="Hoover T.R."/>
            <person name="Brun Y.V."/>
            <person name="Weiner R.M."/>
            <person name="Laub M.T."/>
            <person name="Alexandre G."/>
            <person name="Mrazek J."/>
            <person name="Ren Q."/>
            <person name="Paulsen I.T."/>
            <person name="Nelson K.E."/>
            <person name="Khouri H.M."/>
            <person name="Radune D."/>
            <person name="Sosa J."/>
            <person name="Dodson R.J."/>
            <person name="Sullivan S.A."/>
            <person name="Rosovitz M.J."/>
            <person name="Madupu R."/>
            <person name="Brinkac L.M."/>
            <person name="Durkin A.S."/>
            <person name="Daugherty S.C."/>
            <person name="Kothari S.P."/>
            <person name="Giglio M.G."/>
            <person name="Zhou L."/>
            <person name="Haft D.H."/>
            <person name="Selengut J.D."/>
            <person name="Davidsen T.M."/>
            <person name="Yang Q."/>
            <person name="Zafar N."/>
            <person name="Ward N.L."/>
        </authorList>
    </citation>
    <scope>NUCLEOTIDE SEQUENCE [LARGE SCALE GENOMIC DNA]</scope>
    <source>
        <strain>ATCC 15444</strain>
    </source>
</reference>
<dbReference type="EC" id="6.3.5.-" evidence="1"/>
<dbReference type="EMBL" id="CP000158">
    <property type="protein sequence ID" value="ABI78539.1"/>
    <property type="molecule type" value="Genomic_DNA"/>
</dbReference>
<dbReference type="RefSeq" id="WP_011647292.1">
    <property type="nucleotide sequence ID" value="NC_008358.1"/>
</dbReference>
<dbReference type="SMR" id="Q0BZU9"/>
<dbReference type="STRING" id="228405.HNE_2299"/>
<dbReference type="KEGG" id="hne:HNE_2299"/>
<dbReference type="eggNOG" id="COG0721">
    <property type="taxonomic scope" value="Bacteria"/>
</dbReference>
<dbReference type="HOGENOM" id="CLU_105899_2_0_5"/>
<dbReference type="Proteomes" id="UP000001959">
    <property type="component" value="Chromosome"/>
</dbReference>
<dbReference type="GO" id="GO:0050566">
    <property type="term" value="F:asparaginyl-tRNA synthase (glutamine-hydrolyzing) activity"/>
    <property type="evidence" value="ECO:0007669"/>
    <property type="project" value="RHEA"/>
</dbReference>
<dbReference type="GO" id="GO:0005524">
    <property type="term" value="F:ATP binding"/>
    <property type="evidence" value="ECO:0007669"/>
    <property type="project" value="UniProtKB-KW"/>
</dbReference>
<dbReference type="GO" id="GO:0050567">
    <property type="term" value="F:glutaminyl-tRNA synthase (glutamine-hydrolyzing) activity"/>
    <property type="evidence" value="ECO:0007669"/>
    <property type="project" value="UniProtKB-UniRule"/>
</dbReference>
<dbReference type="GO" id="GO:0070681">
    <property type="term" value="P:glutaminyl-tRNAGln biosynthesis via transamidation"/>
    <property type="evidence" value="ECO:0007669"/>
    <property type="project" value="TreeGrafter"/>
</dbReference>
<dbReference type="GO" id="GO:0006450">
    <property type="term" value="P:regulation of translational fidelity"/>
    <property type="evidence" value="ECO:0007669"/>
    <property type="project" value="InterPro"/>
</dbReference>
<dbReference type="GO" id="GO:0006412">
    <property type="term" value="P:translation"/>
    <property type="evidence" value="ECO:0007669"/>
    <property type="project" value="UniProtKB-UniRule"/>
</dbReference>
<dbReference type="Gene3D" id="1.10.20.60">
    <property type="entry name" value="Glu-tRNAGln amidotransferase C subunit, N-terminal domain"/>
    <property type="match status" value="1"/>
</dbReference>
<dbReference type="HAMAP" id="MF_00122">
    <property type="entry name" value="GatC"/>
    <property type="match status" value="1"/>
</dbReference>
<dbReference type="InterPro" id="IPR036113">
    <property type="entry name" value="Asp/Glu-ADT_sf_sub_c"/>
</dbReference>
<dbReference type="InterPro" id="IPR003837">
    <property type="entry name" value="GatC"/>
</dbReference>
<dbReference type="NCBIfam" id="TIGR00135">
    <property type="entry name" value="gatC"/>
    <property type="match status" value="1"/>
</dbReference>
<dbReference type="PANTHER" id="PTHR15004">
    <property type="entry name" value="GLUTAMYL-TRNA(GLN) AMIDOTRANSFERASE SUBUNIT C, MITOCHONDRIAL"/>
    <property type="match status" value="1"/>
</dbReference>
<dbReference type="PANTHER" id="PTHR15004:SF0">
    <property type="entry name" value="GLUTAMYL-TRNA(GLN) AMIDOTRANSFERASE SUBUNIT C, MITOCHONDRIAL"/>
    <property type="match status" value="1"/>
</dbReference>
<dbReference type="Pfam" id="PF02686">
    <property type="entry name" value="GatC"/>
    <property type="match status" value="1"/>
</dbReference>
<dbReference type="SUPFAM" id="SSF141000">
    <property type="entry name" value="Glu-tRNAGln amidotransferase C subunit"/>
    <property type="match status" value="1"/>
</dbReference>